<proteinExistence type="evidence at transcript level"/>
<reference key="1">
    <citation type="journal article" date="2005" name="Science">
        <title>The transcriptional landscape of the mammalian genome.</title>
        <authorList>
            <person name="Carninci P."/>
            <person name="Kasukawa T."/>
            <person name="Katayama S."/>
            <person name="Gough J."/>
            <person name="Frith M.C."/>
            <person name="Maeda N."/>
            <person name="Oyama R."/>
            <person name="Ravasi T."/>
            <person name="Lenhard B."/>
            <person name="Wells C."/>
            <person name="Kodzius R."/>
            <person name="Shimokawa K."/>
            <person name="Bajic V.B."/>
            <person name="Brenner S.E."/>
            <person name="Batalov S."/>
            <person name="Forrest A.R."/>
            <person name="Zavolan M."/>
            <person name="Davis M.J."/>
            <person name="Wilming L.G."/>
            <person name="Aidinis V."/>
            <person name="Allen J.E."/>
            <person name="Ambesi-Impiombato A."/>
            <person name="Apweiler R."/>
            <person name="Aturaliya R.N."/>
            <person name="Bailey T.L."/>
            <person name="Bansal M."/>
            <person name="Baxter L."/>
            <person name="Beisel K.W."/>
            <person name="Bersano T."/>
            <person name="Bono H."/>
            <person name="Chalk A.M."/>
            <person name="Chiu K.P."/>
            <person name="Choudhary V."/>
            <person name="Christoffels A."/>
            <person name="Clutterbuck D.R."/>
            <person name="Crowe M.L."/>
            <person name="Dalla E."/>
            <person name="Dalrymple B.P."/>
            <person name="de Bono B."/>
            <person name="Della Gatta G."/>
            <person name="di Bernardo D."/>
            <person name="Down T."/>
            <person name="Engstrom P."/>
            <person name="Fagiolini M."/>
            <person name="Faulkner G."/>
            <person name="Fletcher C.F."/>
            <person name="Fukushima T."/>
            <person name="Furuno M."/>
            <person name="Futaki S."/>
            <person name="Gariboldi M."/>
            <person name="Georgii-Hemming P."/>
            <person name="Gingeras T.R."/>
            <person name="Gojobori T."/>
            <person name="Green R.E."/>
            <person name="Gustincich S."/>
            <person name="Harbers M."/>
            <person name="Hayashi Y."/>
            <person name="Hensch T.K."/>
            <person name="Hirokawa N."/>
            <person name="Hill D."/>
            <person name="Huminiecki L."/>
            <person name="Iacono M."/>
            <person name="Ikeo K."/>
            <person name="Iwama A."/>
            <person name="Ishikawa T."/>
            <person name="Jakt M."/>
            <person name="Kanapin A."/>
            <person name="Katoh M."/>
            <person name="Kawasawa Y."/>
            <person name="Kelso J."/>
            <person name="Kitamura H."/>
            <person name="Kitano H."/>
            <person name="Kollias G."/>
            <person name="Krishnan S.P."/>
            <person name="Kruger A."/>
            <person name="Kummerfeld S.K."/>
            <person name="Kurochkin I.V."/>
            <person name="Lareau L.F."/>
            <person name="Lazarevic D."/>
            <person name="Lipovich L."/>
            <person name="Liu J."/>
            <person name="Liuni S."/>
            <person name="McWilliam S."/>
            <person name="Madan Babu M."/>
            <person name="Madera M."/>
            <person name="Marchionni L."/>
            <person name="Matsuda H."/>
            <person name="Matsuzawa S."/>
            <person name="Miki H."/>
            <person name="Mignone F."/>
            <person name="Miyake S."/>
            <person name="Morris K."/>
            <person name="Mottagui-Tabar S."/>
            <person name="Mulder N."/>
            <person name="Nakano N."/>
            <person name="Nakauchi H."/>
            <person name="Ng P."/>
            <person name="Nilsson R."/>
            <person name="Nishiguchi S."/>
            <person name="Nishikawa S."/>
            <person name="Nori F."/>
            <person name="Ohara O."/>
            <person name="Okazaki Y."/>
            <person name="Orlando V."/>
            <person name="Pang K.C."/>
            <person name="Pavan W.J."/>
            <person name="Pavesi G."/>
            <person name="Pesole G."/>
            <person name="Petrovsky N."/>
            <person name="Piazza S."/>
            <person name="Reed J."/>
            <person name="Reid J.F."/>
            <person name="Ring B.Z."/>
            <person name="Ringwald M."/>
            <person name="Rost B."/>
            <person name="Ruan Y."/>
            <person name="Salzberg S.L."/>
            <person name="Sandelin A."/>
            <person name="Schneider C."/>
            <person name="Schoenbach C."/>
            <person name="Sekiguchi K."/>
            <person name="Semple C.A."/>
            <person name="Seno S."/>
            <person name="Sessa L."/>
            <person name="Sheng Y."/>
            <person name="Shibata Y."/>
            <person name="Shimada H."/>
            <person name="Shimada K."/>
            <person name="Silva D."/>
            <person name="Sinclair B."/>
            <person name="Sperling S."/>
            <person name="Stupka E."/>
            <person name="Sugiura K."/>
            <person name="Sultana R."/>
            <person name="Takenaka Y."/>
            <person name="Taki K."/>
            <person name="Tammoja K."/>
            <person name="Tan S.L."/>
            <person name="Tang S."/>
            <person name="Taylor M.S."/>
            <person name="Tegner J."/>
            <person name="Teichmann S.A."/>
            <person name="Ueda H.R."/>
            <person name="van Nimwegen E."/>
            <person name="Verardo R."/>
            <person name="Wei C.L."/>
            <person name="Yagi K."/>
            <person name="Yamanishi H."/>
            <person name="Zabarovsky E."/>
            <person name="Zhu S."/>
            <person name="Zimmer A."/>
            <person name="Hide W."/>
            <person name="Bult C."/>
            <person name="Grimmond S.M."/>
            <person name="Teasdale R.D."/>
            <person name="Liu E.T."/>
            <person name="Brusic V."/>
            <person name="Quackenbush J."/>
            <person name="Wahlestedt C."/>
            <person name="Mattick J.S."/>
            <person name="Hume D.A."/>
            <person name="Kai C."/>
            <person name="Sasaki D."/>
            <person name="Tomaru Y."/>
            <person name="Fukuda S."/>
            <person name="Kanamori-Katayama M."/>
            <person name="Suzuki M."/>
            <person name="Aoki J."/>
            <person name="Arakawa T."/>
            <person name="Iida J."/>
            <person name="Imamura K."/>
            <person name="Itoh M."/>
            <person name="Kato T."/>
            <person name="Kawaji H."/>
            <person name="Kawagashira N."/>
            <person name="Kawashima T."/>
            <person name="Kojima M."/>
            <person name="Kondo S."/>
            <person name="Konno H."/>
            <person name="Nakano K."/>
            <person name="Ninomiya N."/>
            <person name="Nishio T."/>
            <person name="Okada M."/>
            <person name="Plessy C."/>
            <person name="Shibata K."/>
            <person name="Shiraki T."/>
            <person name="Suzuki S."/>
            <person name="Tagami M."/>
            <person name="Waki K."/>
            <person name="Watahiki A."/>
            <person name="Okamura-Oho Y."/>
            <person name="Suzuki H."/>
            <person name="Kawai J."/>
            <person name="Hayashizaki Y."/>
        </authorList>
    </citation>
    <scope>NUCLEOTIDE SEQUENCE [LARGE SCALE MRNA] (ISOFORMS 1 AND 2)</scope>
    <source>
        <strain>C57BL/6J</strain>
        <tissue>Kidney</tissue>
    </source>
</reference>
<reference key="2">
    <citation type="journal article" date="2004" name="Genome Res.">
        <title>The status, quality, and expansion of the NIH full-length cDNA project: the Mammalian Gene Collection (MGC).</title>
        <authorList>
            <consortium name="The MGC Project Team"/>
        </authorList>
    </citation>
    <scope>NUCLEOTIDE SEQUENCE [LARGE SCALE MRNA] (ISOFORM 1)</scope>
    <source>
        <tissue>Mammary tumor</tissue>
    </source>
</reference>
<feature type="chain" id="PRO_0000279225" description="Transmembrane protein 39A">
    <location>
        <begin position="1"/>
        <end position="486"/>
    </location>
</feature>
<feature type="transmembrane region" description="Helical" evidence="2">
    <location>
        <begin position="72"/>
        <end position="92"/>
    </location>
</feature>
<feature type="transmembrane region" description="Helical" evidence="2">
    <location>
        <begin position="110"/>
        <end position="130"/>
    </location>
</feature>
<feature type="transmembrane region" description="Helical" evidence="2">
    <location>
        <begin position="155"/>
        <end position="175"/>
    </location>
</feature>
<feature type="transmembrane region" description="Helical" evidence="2">
    <location>
        <begin position="182"/>
        <end position="202"/>
    </location>
</feature>
<feature type="transmembrane region" description="Helical" evidence="2">
    <location>
        <begin position="285"/>
        <end position="305"/>
    </location>
</feature>
<feature type="transmembrane region" description="Helical" evidence="2">
    <location>
        <begin position="317"/>
        <end position="337"/>
    </location>
</feature>
<feature type="transmembrane region" description="Helical" evidence="2">
    <location>
        <begin position="418"/>
        <end position="438"/>
    </location>
</feature>
<feature type="transmembrane region" description="Helical" evidence="2">
    <location>
        <begin position="444"/>
        <end position="464"/>
    </location>
</feature>
<feature type="glycosylation site" description="N-linked (GlcNAc...) asparagine" evidence="2">
    <location>
        <position position="31"/>
    </location>
</feature>
<feature type="splice variant" id="VSP_023418" description="In isoform 2." evidence="3">
    <location>
        <begin position="193"/>
        <end position="260"/>
    </location>
</feature>
<feature type="sequence conflict" description="In Ref. 1; BAE40906." evidence="4" ref="1">
    <original>I</original>
    <variation>T</variation>
    <location>
        <position position="81"/>
    </location>
</feature>
<evidence type="ECO:0000250" key="1">
    <source>
        <dbReference type="UniProtKB" id="Q9NV64"/>
    </source>
</evidence>
<evidence type="ECO:0000255" key="2"/>
<evidence type="ECO:0000303" key="3">
    <source>
    </source>
</evidence>
<evidence type="ECO:0000305" key="4"/>
<sequence length="486" mass="55720">MPSRRRGPSRQQLSRSALPSIQTLVGGGCGNGTGLRNRNGNAIGLPVPPTTALITPGPVRHCQIPDLPVDGSLFFEFLFFIYLLIVLFIQYINIYKTVWWYPYNHPASCTSLNFHLIDYYLAAFITVMLARRLVWALISEATKAGAASTVHYTALILARLVLLTLCGWVLCWTLVNLFRSHSVLNLLFLGYPFGVYVPLYCFHQDSRAHLLLTDYVVQHQAVEEAASNVGSLARSKDFLSLLLESLKEQFNNATPIPTHSCPLSPDLIRNEVECLKADFNHRIKEVLFNSLFSAYYVAFLPLCFVKSTQYYDMRWSCEHLIMVWINAFVMLTTQLLPSKYCDLLHKSAAHLGKWQKLEHGFYSNAPQHIWSENTIWPQGVLVRHSRCLYRAMGPYNVAVPSDVSHARFYFLFHRPLRVLNLLILIEGSVVFYQLYSLLRSEKWNHTLSMALILFCNYYVLFKLLRDRIVLGRAYSYPLNSYELKAN</sequence>
<accession>Q9CYC3</accession>
<accession>Q3TFJ2</accession>
<comment type="function">
    <text evidence="1">Regulates autophagy by controlling the spatial distribution and levels of the intracellular phosphatidylinositol 4-phosphate (PtdIns(4)P) pools (By similarity). Modulates (PtdIns(4)P) levels by regulating the ER-to-Golgi trafficking of the phosphatidylinositide phosphatase SACM1L (By similarity).</text>
</comment>
<comment type="subunit">
    <text evidence="1">Interacts with SACM1L, SEC23A and SEC24A.</text>
</comment>
<comment type="subcellular location">
    <subcellularLocation>
        <location evidence="1">Endoplasmic reticulum membrane</location>
        <topology evidence="2">Multi-pass membrane protein</topology>
    </subcellularLocation>
</comment>
<comment type="alternative products">
    <event type="alternative splicing"/>
    <isoform>
        <id>Q9CYC3-1</id>
        <name>1</name>
        <sequence type="displayed"/>
    </isoform>
    <isoform>
        <id>Q9CYC3-2</id>
        <name>2</name>
        <sequence type="described" ref="VSP_023418"/>
    </isoform>
</comment>
<comment type="similarity">
    <text evidence="4">Belongs to the TMEM39 family.</text>
</comment>
<gene>
    <name type="primary">Tmem39a</name>
</gene>
<organism>
    <name type="scientific">Mus musculus</name>
    <name type="common">Mouse</name>
    <dbReference type="NCBI Taxonomy" id="10090"/>
    <lineage>
        <taxon>Eukaryota</taxon>
        <taxon>Metazoa</taxon>
        <taxon>Chordata</taxon>
        <taxon>Craniata</taxon>
        <taxon>Vertebrata</taxon>
        <taxon>Euteleostomi</taxon>
        <taxon>Mammalia</taxon>
        <taxon>Eutheria</taxon>
        <taxon>Euarchontoglires</taxon>
        <taxon>Glires</taxon>
        <taxon>Rodentia</taxon>
        <taxon>Myomorpha</taxon>
        <taxon>Muroidea</taxon>
        <taxon>Muridae</taxon>
        <taxon>Murinae</taxon>
        <taxon>Mus</taxon>
        <taxon>Mus</taxon>
    </lineage>
</organism>
<keyword id="KW-0025">Alternative splicing</keyword>
<keyword id="KW-0072">Autophagy</keyword>
<keyword id="KW-0256">Endoplasmic reticulum</keyword>
<keyword id="KW-0325">Glycoprotein</keyword>
<keyword id="KW-0472">Membrane</keyword>
<keyword id="KW-1185">Reference proteome</keyword>
<keyword id="KW-0812">Transmembrane</keyword>
<keyword id="KW-1133">Transmembrane helix</keyword>
<name>TM39A_MOUSE</name>
<protein>
    <recommendedName>
        <fullName>Transmembrane protein 39A</fullName>
    </recommendedName>
</protein>
<dbReference type="EMBL" id="AK017817">
    <property type="protein sequence ID" value="BAB30953.1"/>
    <property type="molecule type" value="mRNA"/>
</dbReference>
<dbReference type="EMBL" id="AK160576">
    <property type="protein sequence ID" value="BAE35884.1"/>
    <property type="molecule type" value="mRNA"/>
</dbReference>
<dbReference type="EMBL" id="AK169127">
    <property type="protein sequence ID" value="BAE40906.1"/>
    <property type="molecule type" value="mRNA"/>
</dbReference>
<dbReference type="EMBL" id="BC020318">
    <property type="protein sequence ID" value="AAH20318.1"/>
    <property type="molecule type" value="mRNA"/>
</dbReference>
<dbReference type="CCDS" id="CCDS28171.1">
    <molecule id="Q9CYC3-1"/>
</dbReference>
<dbReference type="CCDS" id="CCDS57029.1">
    <molecule id="Q9CYC3-2"/>
</dbReference>
<dbReference type="RefSeq" id="NP_001192215.1">
    <molecule id="Q9CYC3-1"/>
    <property type="nucleotide sequence ID" value="NM_001205286.1"/>
</dbReference>
<dbReference type="RefSeq" id="NP_001192216.1">
    <molecule id="Q9CYC3-2"/>
    <property type="nucleotide sequence ID" value="NM_001205287.1"/>
</dbReference>
<dbReference type="RefSeq" id="NP_080683.2">
    <molecule id="Q9CYC3-1"/>
    <property type="nucleotide sequence ID" value="NM_026407.3"/>
</dbReference>
<dbReference type="FunCoup" id="Q9CYC3">
    <property type="interactions" value="1043"/>
</dbReference>
<dbReference type="STRING" id="10090.ENSMUSP00000002924"/>
<dbReference type="GlyCosmos" id="Q9CYC3">
    <property type="glycosylation" value="1 site, No reported glycans"/>
</dbReference>
<dbReference type="GlyGen" id="Q9CYC3">
    <property type="glycosylation" value="2 sites"/>
</dbReference>
<dbReference type="iPTMnet" id="Q9CYC3"/>
<dbReference type="PhosphoSitePlus" id="Q9CYC3"/>
<dbReference type="PaxDb" id="10090-ENSMUSP00000002924"/>
<dbReference type="ProteomicsDB" id="259228">
    <molecule id="Q9CYC3-1"/>
</dbReference>
<dbReference type="ProteomicsDB" id="259229">
    <molecule id="Q9CYC3-2"/>
</dbReference>
<dbReference type="Antibodypedia" id="49908">
    <property type="antibodies" value="24 antibodies from 12 providers"/>
</dbReference>
<dbReference type="DNASU" id="67846"/>
<dbReference type="Ensembl" id="ENSMUST00000002924.15">
    <molecule id="Q9CYC3-1"/>
    <property type="protein sequence ID" value="ENSMUSP00000002924.9"/>
    <property type="gene ID" value="ENSMUSG00000002845.15"/>
</dbReference>
<dbReference type="Ensembl" id="ENSMUST00000163884.8">
    <molecule id="Q9CYC3-1"/>
    <property type="protein sequence ID" value="ENSMUSP00000132515.2"/>
    <property type="gene ID" value="ENSMUSG00000002845.15"/>
</dbReference>
<dbReference type="Ensembl" id="ENSMUST00000171687.8">
    <molecule id="Q9CYC3-2"/>
    <property type="protein sequence ID" value="ENSMUSP00000126218.2"/>
    <property type="gene ID" value="ENSMUSG00000002845.15"/>
</dbReference>
<dbReference type="GeneID" id="67846"/>
<dbReference type="KEGG" id="mmu:67846"/>
<dbReference type="UCSC" id="uc007zfe.2">
    <molecule id="Q9CYC3-1"/>
    <property type="organism name" value="mouse"/>
</dbReference>
<dbReference type="UCSC" id="uc007zff.2">
    <molecule id="Q9CYC3-2"/>
    <property type="organism name" value="mouse"/>
</dbReference>
<dbReference type="AGR" id="MGI:1915096"/>
<dbReference type="CTD" id="55254"/>
<dbReference type="MGI" id="MGI:1915096">
    <property type="gene designation" value="Tmem39a"/>
</dbReference>
<dbReference type="VEuPathDB" id="HostDB:ENSMUSG00000002845"/>
<dbReference type="eggNOG" id="KOG3828">
    <property type="taxonomic scope" value="Eukaryota"/>
</dbReference>
<dbReference type="GeneTree" id="ENSGT00390000018895"/>
<dbReference type="HOGENOM" id="CLU_028992_0_0_1"/>
<dbReference type="InParanoid" id="Q9CYC3"/>
<dbReference type="OMA" id="RFKQLIF"/>
<dbReference type="OrthoDB" id="5862608at2759"/>
<dbReference type="PhylomeDB" id="Q9CYC3"/>
<dbReference type="TreeFam" id="TF321110"/>
<dbReference type="BioGRID-ORCS" id="67846">
    <property type="hits" value="1 hit in 78 CRISPR screens"/>
</dbReference>
<dbReference type="PRO" id="PR:Q9CYC3"/>
<dbReference type="Proteomes" id="UP000000589">
    <property type="component" value="Chromosome 16"/>
</dbReference>
<dbReference type="RNAct" id="Q9CYC3">
    <property type="molecule type" value="protein"/>
</dbReference>
<dbReference type="Bgee" id="ENSMUSG00000002845">
    <property type="expression patterns" value="Expressed in humerus cartilage element and 219 other cell types or tissues"/>
</dbReference>
<dbReference type="ExpressionAtlas" id="Q9CYC3">
    <property type="expression patterns" value="baseline and differential"/>
</dbReference>
<dbReference type="GO" id="GO:0005789">
    <property type="term" value="C:endoplasmic reticulum membrane"/>
    <property type="evidence" value="ECO:0000250"/>
    <property type="project" value="UniProtKB"/>
</dbReference>
<dbReference type="GO" id="GO:0006914">
    <property type="term" value="P:autophagy"/>
    <property type="evidence" value="ECO:0007669"/>
    <property type="project" value="UniProtKB-KW"/>
</dbReference>
<dbReference type="GO" id="GO:1902902">
    <property type="term" value="P:negative regulation of autophagosome assembly"/>
    <property type="evidence" value="ECO:0000250"/>
    <property type="project" value="UniProtKB"/>
</dbReference>
<dbReference type="GO" id="GO:1901097">
    <property type="term" value="P:negative regulation of autophagosome maturation"/>
    <property type="evidence" value="ECO:0000250"/>
    <property type="project" value="UniProtKB"/>
</dbReference>
<dbReference type="GO" id="GO:0045070">
    <property type="term" value="P:positive regulation of viral genome replication"/>
    <property type="evidence" value="ECO:0007669"/>
    <property type="project" value="Ensembl"/>
</dbReference>
<dbReference type="InterPro" id="IPR019397">
    <property type="entry name" value="Uncharacterised_TMEM39"/>
</dbReference>
<dbReference type="PANTHER" id="PTHR12995">
    <property type="entry name" value="FI21814P1"/>
    <property type="match status" value="1"/>
</dbReference>
<dbReference type="PANTHER" id="PTHR12995:SF3">
    <property type="entry name" value="TRANSMEMBRANE PROTEIN 39A"/>
    <property type="match status" value="1"/>
</dbReference>
<dbReference type="Pfam" id="PF10271">
    <property type="entry name" value="Tmp39"/>
    <property type="match status" value="1"/>
</dbReference>